<comment type="function">
    <text evidence="1 7 8">Involved in the establishment, but not the maintenance, of heterochromatic silencing at the cryptic mating-type loci HMR and HML. Is recruited by interacting with the ORC1 subunit of the origin recognition complex (ORC), which binds to HML-I or HMR-E silencers, DNA elements that direct the formation of silent chromatin at the mating-type loci. Establishes transcriptional silencing by recruiting the three other SIR proteins, SIR2, SIR3, and SIR4, that function directly in silenced chromatin and establish repression. Also found in centromeric chromatin. Binds to and helps retain CAC1, a subunit of chromatin assembly factor I (CAF-I) at centromeric loci independent on the other SIR proteins.</text>
</comment>
<comment type="subunit">
    <text evidence="2 3 4 5 6 8">Interacts (via OIR domain) with ORC1 (via BAH domain). Interacts with SIR4. Interacts with CAC1.</text>
</comment>
<comment type="interaction">
    <interactant intactId="EBI-17211">
        <id>P21691</id>
    </interactant>
    <interactant intactId="EBI-12568">
        <id>P54784</id>
        <label>ORC1</label>
    </interactant>
    <organismsDiffer>false</organismsDiffer>
    <experiments>3</experiments>
</comment>
<comment type="subcellular location">
    <subcellularLocation>
        <location>Nucleus</location>
    </subcellularLocation>
    <subcellularLocation>
        <location>Chromosome</location>
        <location>Centromere</location>
    </subcellularLocation>
    <text>Associated primarily with the HMR-E silencer at the HMR locus.</text>
</comment>
<comment type="sequence caution" evidence="9">
    <conflict type="erroneous initiation">
        <sequence resource="EMBL-CDS" id="AAA35046"/>
    </conflict>
</comment>
<comment type="sequence caution" evidence="9">
    <conflict type="erroneous initiation">
        <sequence resource="EMBL-CDS" id="CAA82181"/>
    </conflict>
</comment>
<protein>
    <recommendedName>
        <fullName>Regulatory protein SIR1</fullName>
    </recommendedName>
    <alternativeName>
        <fullName>Heterochromatin protein SIR1</fullName>
    </alternativeName>
    <alternativeName>
        <fullName>Silent information regulator 1</fullName>
    </alternativeName>
</protein>
<evidence type="ECO:0000269" key="1">
    <source>
    </source>
</evidence>
<evidence type="ECO:0000269" key="2">
    <source>
    </source>
</evidence>
<evidence type="ECO:0000269" key="3">
    <source>
    </source>
</evidence>
<evidence type="ECO:0000269" key="4">
    <source>
    </source>
</evidence>
<evidence type="ECO:0000269" key="5">
    <source>
    </source>
</evidence>
<evidence type="ECO:0000269" key="6">
    <source>
    </source>
</evidence>
<evidence type="ECO:0000269" key="7">
    <source>
    </source>
</evidence>
<evidence type="ECO:0000269" key="8">
    <source>
    </source>
</evidence>
<evidence type="ECO:0000305" key="9"/>
<evidence type="ECO:0007829" key="10">
    <source>
        <dbReference type="PDB" id="1Z1A"/>
    </source>
</evidence>
<evidence type="ECO:0007829" key="11">
    <source>
        <dbReference type="PDB" id="1ZBX"/>
    </source>
</evidence>
<accession>P21691</accession>
<accession>D6VXG2</accession>
<sequence>MLQINSRLAVIDGWLVDTVKRKPINFRSPEVRLLLPNDDDYKKLSQQNLVDWTRLKKDSNSVLVGVKSMELFKHIKLVLREFFLLEDGRIILKRIRSKLRYKVVKKLTCKCCRLYLPKWGTVYIHPMLKDKEKPLAGVCEFSLDVNPDREYPLIEINVSHQYIIIEGFLLYLNERRLYRWNDNNLRSQVGLTKWAHLRKTYNPVSLDILYSLNSNFYFVKDDLLFQLLGKRVFVKFCKVMENGKCGKAPLWYRVKRTTTAKATHIAYAISNSTAPDSFKSKNNDYRFIVREKPIVENTISNLDYSDIKKQQFTEAEVVKRKISADISQIENVHTQFNSQKEKNNIRVNKVSSEVLDQISKFPVSRVTLLLMSAGQDKNYIELVEELARRLEKICIEKTTQSLEEIRDTFQANPEMQASFDKEYYQSIEEYKITLELIKEDLLITLIKQMENMWAAEKKFSTEEEYVSPRFLVADGFLIDLAEEKPINPKDPRLLTLLKDHQRAMIDQMNLVKWNDFKKYQDPIPLKAKTLFKFCKQIKKKFLRGADFKLHTLPTEANLKYEPERMTVLCSCVPILLDDQTVQYLYDDSIIPEFEATSSYATKQSKCGRKMSLQMEPDLLFQEAIRRMRHLTAYDVLRRNYIAAFEELYMGNCND</sequence>
<gene>
    <name type="primary">SIR1</name>
    <name type="ordered locus">YKR101W</name>
</gene>
<dbReference type="EMBL" id="M38524">
    <property type="protein sequence ID" value="AAA35046.1"/>
    <property type="status" value="ALT_INIT"/>
    <property type="molecule type" value="Genomic_DNA"/>
</dbReference>
<dbReference type="EMBL" id="Z28326">
    <property type="protein sequence ID" value="CAA82181.1"/>
    <property type="status" value="ALT_INIT"/>
    <property type="molecule type" value="Genomic_DNA"/>
</dbReference>
<dbReference type="EMBL" id="BK006944">
    <property type="protein sequence ID" value="DAA09252.1"/>
    <property type="molecule type" value="Genomic_DNA"/>
</dbReference>
<dbReference type="PIR" id="S14173">
    <property type="entry name" value="S14173"/>
</dbReference>
<dbReference type="RefSeq" id="NP_013027.4">
    <property type="nucleotide sequence ID" value="NM_001179891.3"/>
</dbReference>
<dbReference type="PDB" id="1Z1A">
    <property type="method" value="X-ray"/>
    <property type="resolution" value="2.50 A"/>
    <property type="chains" value="A/B=449-587"/>
</dbReference>
<dbReference type="PDB" id="1ZBX">
    <property type="method" value="X-ray"/>
    <property type="resolution" value="2.50 A"/>
    <property type="chains" value="B=456-588"/>
</dbReference>
<dbReference type="PDB" id="1ZHI">
    <property type="method" value="X-ray"/>
    <property type="resolution" value="2.70 A"/>
    <property type="chains" value="B=456-587"/>
</dbReference>
<dbReference type="PDBsum" id="1Z1A"/>
<dbReference type="PDBsum" id="1ZBX"/>
<dbReference type="PDBsum" id="1ZHI"/>
<dbReference type="SMR" id="P21691"/>
<dbReference type="BioGRID" id="34232">
    <property type="interactions" value="86"/>
</dbReference>
<dbReference type="DIP" id="DIP-2453N"/>
<dbReference type="FunCoup" id="P21691">
    <property type="interactions" value="86"/>
</dbReference>
<dbReference type="IntAct" id="P21691">
    <property type="interactions" value="6"/>
</dbReference>
<dbReference type="MINT" id="P21691"/>
<dbReference type="STRING" id="4932.YKR101W"/>
<dbReference type="iPTMnet" id="P21691"/>
<dbReference type="PaxDb" id="4932-YKR101W"/>
<dbReference type="PeptideAtlas" id="P21691"/>
<dbReference type="EnsemblFungi" id="YKR101W_mRNA">
    <property type="protein sequence ID" value="YKR101W"/>
    <property type="gene ID" value="YKR101W"/>
</dbReference>
<dbReference type="GeneID" id="853976"/>
<dbReference type="KEGG" id="sce:YKR101W"/>
<dbReference type="AGR" id="SGD:S000001809"/>
<dbReference type="SGD" id="S000001809">
    <property type="gene designation" value="SIR1"/>
</dbReference>
<dbReference type="VEuPathDB" id="FungiDB:YKR101W"/>
<dbReference type="eggNOG" id="ENOG502SG8F">
    <property type="taxonomic scope" value="Eukaryota"/>
</dbReference>
<dbReference type="HOGENOM" id="CLU_449838_0_0_1"/>
<dbReference type="InParanoid" id="P21691"/>
<dbReference type="OMA" id="IFDECHE"/>
<dbReference type="OrthoDB" id="4043842at2759"/>
<dbReference type="BioCyc" id="YEAST:G3O-32063-MONOMER"/>
<dbReference type="BioGRID-ORCS" id="853976">
    <property type="hits" value="0 hits in 10 CRISPR screens"/>
</dbReference>
<dbReference type="EvolutionaryTrace" id="P21691"/>
<dbReference type="PRO" id="PR:P21691"/>
<dbReference type="Proteomes" id="UP000002311">
    <property type="component" value="Chromosome XI"/>
</dbReference>
<dbReference type="RNAct" id="P21691">
    <property type="molecule type" value="protein"/>
</dbReference>
<dbReference type="GO" id="GO:0005677">
    <property type="term" value="C:chromatin silencing complex"/>
    <property type="evidence" value="ECO:0000314"/>
    <property type="project" value="SGD"/>
</dbReference>
<dbReference type="GO" id="GO:0000775">
    <property type="term" value="C:chromosome, centromeric region"/>
    <property type="evidence" value="ECO:0007669"/>
    <property type="project" value="UniProtKB-SubCell"/>
</dbReference>
<dbReference type="GO" id="GO:0031507">
    <property type="term" value="P:heterochromatin formation"/>
    <property type="evidence" value="ECO:0000315"/>
    <property type="project" value="SGD"/>
</dbReference>
<dbReference type="GO" id="GO:0030466">
    <property type="term" value="P:silent mating-type cassette heterochromatin formation"/>
    <property type="evidence" value="ECO:0000314"/>
    <property type="project" value="SGD"/>
</dbReference>
<dbReference type="InterPro" id="IPR037240">
    <property type="entry name" value="ORC1-binding_dom"/>
</dbReference>
<dbReference type="InterPro" id="IPR021646">
    <property type="entry name" value="Sir1_ORC-binding"/>
</dbReference>
<dbReference type="Pfam" id="PF11603">
    <property type="entry name" value="Sir1"/>
    <property type="match status" value="2"/>
</dbReference>
<dbReference type="SUPFAM" id="SSF144005">
    <property type="entry name" value="ORC1-binding domain"/>
    <property type="match status" value="2"/>
</dbReference>
<reference key="1">
    <citation type="journal article" date="1991" name="Mol. Cell. Biol.">
        <title>The SIR1 gene of Saccharomyces cerevisiae and its role as an extragenic suppressor of several mating-defective mutants.</title>
        <authorList>
            <person name="Stone E.M."/>
            <person name="Swanson M.J."/>
            <person name="Romeo A.M."/>
            <person name="Hicks J.B."/>
            <person name="Sternglanz R."/>
        </authorList>
    </citation>
    <scope>NUCLEOTIDE SEQUENCE [GENOMIC DNA]</scope>
</reference>
<reference key="2">
    <citation type="journal article" date="1994" name="Nature">
        <title>Complete DNA sequence of yeast chromosome XI.</title>
        <authorList>
            <person name="Dujon B."/>
            <person name="Alexandraki D."/>
            <person name="Andre B."/>
            <person name="Ansorge W."/>
            <person name="Baladron V."/>
            <person name="Ballesta J.P.G."/>
            <person name="Banrevi A."/>
            <person name="Bolle P.-A."/>
            <person name="Bolotin-Fukuhara M."/>
            <person name="Bossier P."/>
            <person name="Bou G."/>
            <person name="Boyer J."/>
            <person name="Buitrago M.J."/>
            <person name="Cheret G."/>
            <person name="Colleaux L."/>
            <person name="Daignan-Fornier B."/>
            <person name="del Rey F."/>
            <person name="Dion C."/>
            <person name="Domdey H."/>
            <person name="Duesterhoeft A."/>
            <person name="Duesterhus S."/>
            <person name="Entian K.-D."/>
            <person name="Erfle H."/>
            <person name="Esteban P.F."/>
            <person name="Feldmann H."/>
            <person name="Fernandes L."/>
            <person name="Fobo G.M."/>
            <person name="Fritz C."/>
            <person name="Fukuhara H."/>
            <person name="Gabel C."/>
            <person name="Gaillon L."/>
            <person name="Garcia-Cantalejo J.M."/>
            <person name="Garcia-Ramirez J.J."/>
            <person name="Gent M.E."/>
            <person name="Ghazvini M."/>
            <person name="Goffeau A."/>
            <person name="Gonzalez A."/>
            <person name="Grothues D."/>
            <person name="Guerreiro P."/>
            <person name="Hegemann J.H."/>
            <person name="Hewitt N."/>
            <person name="Hilger F."/>
            <person name="Hollenberg C.P."/>
            <person name="Horaitis O."/>
            <person name="Indge K.J."/>
            <person name="Jacquier A."/>
            <person name="James C.M."/>
            <person name="Jauniaux J.-C."/>
            <person name="Jimenez A."/>
            <person name="Keuchel H."/>
            <person name="Kirchrath L."/>
            <person name="Kleine K."/>
            <person name="Koetter P."/>
            <person name="Legrain P."/>
            <person name="Liebl S."/>
            <person name="Louis E.J."/>
            <person name="Maia e Silva A."/>
            <person name="Marck C."/>
            <person name="Monnier A.-L."/>
            <person name="Moestl D."/>
            <person name="Mueller S."/>
            <person name="Obermaier B."/>
            <person name="Oliver S.G."/>
            <person name="Pallier C."/>
            <person name="Pascolo S."/>
            <person name="Pfeiffer F."/>
            <person name="Philippsen P."/>
            <person name="Planta R.J."/>
            <person name="Pohl F.M."/>
            <person name="Pohl T.M."/>
            <person name="Poehlmann R."/>
            <person name="Portetelle D."/>
            <person name="Purnelle B."/>
            <person name="Puzos V."/>
            <person name="Ramezani Rad M."/>
            <person name="Rasmussen S.W."/>
            <person name="Remacha M.A."/>
            <person name="Revuelta J.L."/>
            <person name="Richard G.-F."/>
            <person name="Rieger M."/>
            <person name="Rodrigues-Pousada C."/>
            <person name="Rose M."/>
            <person name="Rupp T."/>
            <person name="Santos M.A."/>
            <person name="Schwager C."/>
            <person name="Sensen C."/>
            <person name="Skala J."/>
            <person name="Soares H."/>
            <person name="Sor F."/>
            <person name="Stegemann J."/>
            <person name="Tettelin H."/>
            <person name="Thierry A."/>
            <person name="Tzermia M."/>
            <person name="Urrestarazu L.A."/>
            <person name="van Dyck L."/>
            <person name="van Vliet-Reedijk J.C."/>
            <person name="Valens M."/>
            <person name="Vandenbol M."/>
            <person name="Vilela C."/>
            <person name="Vissers S."/>
            <person name="von Wettstein D."/>
            <person name="Voss H."/>
            <person name="Wiemann S."/>
            <person name="Xu G."/>
            <person name="Zimmermann J."/>
            <person name="Haasemann M."/>
            <person name="Becker I."/>
            <person name="Mewes H.-W."/>
        </authorList>
    </citation>
    <scope>NUCLEOTIDE SEQUENCE [LARGE SCALE GENOMIC DNA]</scope>
    <source>
        <strain>ATCC 204508 / S288c</strain>
    </source>
</reference>
<reference key="3">
    <citation type="journal article" date="2014" name="G3 (Bethesda)">
        <title>The reference genome sequence of Saccharomyces cerevisiae: Then and now.</title>
        <authorList>
            <person name="Engel S.R."/>
            <person name="Dietrich F.S."/>
            <person name="Fisk D.G."/>
            <person name="Binkley G."/>
            <person name="Balakrishnan R."/>
            <person name="Costanzo M.C."/>
            <person name="Dwight S.S."/>
            <person name="Hitz B.C."/>
            <person name="Karra K."/>
            <person name="Nash R.S."/>
            <person name="Weng S."/>
            <person name="Wong E.D."/>
            <person name="Lloyd P."/>
            <person name="Skrzypek M.S."/>
            <person name="Miyasato S.R."/>
            <person name="Simison M."/>
            <person name="Cherry J.M."/>
        </authorList>
    </citation>
    <scope>GENOME REANNOTATION</scope>
    <source>
        <strain>ATCC 204508 / S288c</strain>
    </source>
</reference>
<reference key="4">
    <citation type="journal article" date="1993" name="Cell">
        <title>Targeting of SIR1 protein establishes transcriptional silencing at HM loci and telomeres in yeast.</title>
        <authorList>
            <person name="Chien C.T."/>
            <person name="Buck S."/>
            <person name="Sternglanz R."/>
            <person name="Shore D."/>
        </authorList>
    </citation>
    <scope>FUNCTION</scope>
</reference>
<reference key="5">
    <citation type="journal article" date="1996" name="Nature">
        <title>Role of interactions between the origin recognition complex and SIR1 in transcriptional silencing.</title>
        <authorList>
            <person name="Triolo T."/>
            <person name="Sternglanz R."/>
        </authorList>
    </citation>
    <scope>FUNCTION</scope>
    <scope>INTERACTION WITH ORC1</scope>
</reference>
<reference key="6">
    <citation type="journal article" date="2001" name="Gene">
        <title>The molecular biology of the SIR proteins.</title>
        <authorList>
            <person name="Gasser S.M."/>
            <person name="Cockell M.M."/>
        </authorList>
    </citation>
    <scope>REVIEW</scope>
</reference>
<reference key="7">
    <citation type="journal article" date="2001" name="Genes Dev.">
        <title>The Sir1 protein's association with a silenced chromosome domain.</title>
        <authorList>
            <person name="Gardner K.A."/>
            <person name="Fox C.A."/>
        </authorList>
    </citation>
    <scope>SUBCELLULAR LOCATION</scope>
</reference>
<reference key="8">
    <citation type="journal article" date="2002" name="EMBO J.">
        <title>Structure and function of the BAH-containing domain of Orc1p in epigenetic silencing.</title>
        <authorList>
            <person name="Zhang Z."/>
            <person name="Hayashi M.K."/>
            <person name="Merkel O."/>
            <person name="Stillman B."/>
            <person name="Xu R.-M."/>
        </authorList>
    </citation>
    <scope>SUBCELLULAR LOCATION</scope>
    <scope>INTERACTION WITH ORC1</scope>
</reference>
<reference key="9">
    <citation type="journal article" date="2002" name="Mol. Biol. Cell">
        <title>Ordered nucleation and spreading of silenced chromatin in Saccharomyces cerevisiae.</title>
        <authorList>
            <person name="Rusche L.N."/>
            <person name="Kirchmaier A.L."/>
            <person name="Rine J."/>
        </authorList>
    </citation>
    <scope>FUNCTION</scope>
    <scope>SUBCELLULAR LOCATION</scope>
</reference>
<reference key="10">
    <citation type="journal article" date="2003" name="Genes Dev.">
        <title>The budding yeast silencing protein Sir1 is a functional component of centromeric chromatin.</title>
        <authorList>
            <person name="Sharp J.A."/>
            <person name="Krawitz D.C."/>
            <person name="Gardner K.A."/>
            <person name="Fox C.A."/>
            <person name="Kaufman P.D."/>
        </authorList>
    </citation>
    <scope>SUBCELLULAR LOCATION</scope>
    <scope>INTERACTION WITH CAC1</scope>
</reference>
<reference key="11">
    <citation type="journal article" date="2004" name="Mol. Cell. Biol.">
        <title>The origin recognition complex and Sir4 protein recruit Sir1p to yeast silent chromatin through independent interactions requiring a common Sir1p domain.</title>
        <authorList>
            <person name="Bose M.E."/>
            <person name="McConnell K.H."/>
            <person name="Gardner-Aukema K.A."/>
            <person name="Mueller U."/>
            <person name="Weinreich M."/>
            <person name="Keck J.L."/>
            <person name="Fox C.A."/>
        </authorList>
    </citation>
    <scope>INTERACTION WITH ORC1 AND SIR4</scope>
    <scope>MUTAGENESIS OF 462-GLU--GLU-464; VAL-466; ARG-469; PHE-470; LEU-477; ASP-479; LEU-480; 482-GLU-GLU-483; 489-LYS-ASP-490; 498-LYS-ASP-499; TRP-513; 517-LYS-LYS-518; CYS-534; 538-LYS--LYS-540; CYS-571; VAL-572; PRO-573; 577-ASP-ASP-578; LEU-584 AND 586-ASP-ASP-587</scope>
</reference>
<reference key="12">
    <citation type="journal article" date="2009" name="Genetics">
        <title>Elaboration, diversification and regulation of the sir1 family of silencing proteins in Saccharomyces.</title>
        <authorList>
            <person name="Gallagher J.E.G."/>
            <person name="Babiarz J.E."/>
            <person name="Teytelman L."/>
            <person name="Wolfe K.H."/>
            <person name="Rine J."/>
        </authorList>
    </citation>
    <scope>IDENTIFICATION OF INITIATION SITE</scope>
</reference>
<reference key="13">
    <citation type="journal article" date="2005" name="Proc. Natl. Acad. Sci. U.S.A.">
        <title>Structural basis of the Sir1-origin recognition complex interaction in transcriptional silencing.</title>
        <authorList>
            <person name="Hou Z."/>
            <person name="Bernstein D.A."/>
            <person name="Fox C.A."/>
            <person name="Keck J.L."/>
        </authorList>
    </citation>
    <scope>X-RAY CRYSTALLOGRAPHY (2.5 ANGSTROMS) OF 449-587 OF MUTANT ALA-569 IN COMPLEX WITH ORC1</scope>
</reference>
<reference key="14">
    <citation type="journal article" date="2005" name="Proc. Natl. Acad. Sci. U.S.A.">
        <title>Structural basis for origin recognition complex 1 protein-silence information regulator 1 protein interaction in epigenetic silencing.</title>
        <authorList>
            <person name="Hsu H.-C."/>
            <person name="Stillman B."/>
            <person name="Xu R.-M."/>
        </authorList>
    </citation>
    <scope>X-RAY CRYSTALLOGRAPHY (2.5 ANGSTROMS) OF 456-588 IN COMPLEX WITH ORC1</scope>
</reference>
<keyword id="KW-0002">3D-structure</keyword>
<keyword id="KW-0137">Centromere</keyword>
<keyword id="KW-0158">Chromosome</keyword>
<keyword id="KW-0539">Nucleus</keyword>
<keyword id="KW-1185">Reference proteome</keyword>
<keyword id="KW-0678">Repressor</keyword>
<keyword id="KW-0804">Transcription</keyword>
<keyword id="KW-0805">Transcription regulation</keyword>
<proteinExistence type="evidence at protein level"/>
<organism>
    <name type="scientific">Saccharomyces cerevisiae (strain ATCC 204508 / S288c)</name>
    <name type="common">Baker's yeast</name>
    <dbReference type="NCBI Taxonomy" id="559292"/>
    <lineage>
        <taxon>Eukaryota</taxon>
        <taxon>Fungi</taxon>
        <taxon>Dikarya</taxon>
        <taxon>Ascomycota</taxon>
        <taxon>Saccharomycotina</taxon>
        <taxon>Saccharomycetes</taxon>
        <taxon>Saccharomycetales</taxon>
        <taxon>Saccharomycetaceae</taxon>
        <taxon>Saccharomyces</taxon>
    </lineage>
</organism>
<name>SIR1_YEAST</name>
<feature type="chain" id="PRO_0000097767" description="Regulatory protein SIR1">
    <location>
        <begin position="1"/>
        <end position="654"/>
    </location>
</feature>
<feature type="region of interest" description="Sufficient for interaction with SIR4" evidence="4">
    <location>
        <begin position="322"/>
        <end position="654"/>
    </location>
</feature>
<feature type="region of interest" description="ORC interacting region (OIR)">
    <location>
        <begin position="449"/>
        <end position="587"/>
    </location>
</feature>
<feature type="mutagenesis site" description="No effect." evidence="4">
    <original>EEE</original>
    <variation>AAA</variation>
    <location>
        <begin position="462"/>
        <end position="464"/>
    </location>
</feature>
<feature type="mutagenesis site" description="Abolishes interaction with ORC1." evidence="4">
    <original>V</original>
    <variation>G</variation>
    <location>
        <position position="466"/>
    </location>
</feature>
<feature type="mutagenesis site" description="Abolishes interaction with ORC1." evidence="4">
    <original>R</original>
    <variation>G</variation>
    <location>
        <position position="469"/>
    </location>
</feature>
<feature type="mutagenesis site" description="Abolishes interaction with ORC1 and SIR4." evidence="4">
    <original>F</original>
    <variation>S</variation>
    <location>
        <position position="470"/>
    </location>
</feature>
<feature type="mutagenesis site" description="Abolishes interaction with ORC1 and SIR4." evidence="4">
    <original>L</original>
    <variation>P</variation>
    <location>
        <position position="477"/>
    </location>
</feature>
<feature type="mutagenesis site" description="Abolishes interaction with ORC1." evidence="4">
    <original>D</original>
    <variation>N</variation>
    <location>
        <position position="479"/>
    </location>
</feature>
<feature type="mutagenesis site" description="Abolishes interaction with ORC1." evidence="4">
    <original>L</original>
    <variation>P</variation>
    <location>
        <position position="480"/>
    </location>
</feature>
<feature type="mutagenesis site" description="No effect." evidence="4">
    <original>EE</original>
    <variation>AA</variation>
    <location>
        <begin position="482"/>
        <end position="483"/>
    </location>
</feature>
<feature type="mutagenesis site" description="No effect." evidence="4">
    <original>KD</original>
    <variation>AA</variation>
    <location>
        <begin position="489"/>
        <end position="490"/>
    </location>
</feature>
<feature type="mutagenesis site" description="No effect." evidence="4">
    <original>KD</original>
    <variation>AA</variation>
    <location>
        <begin position="498"/>
        <end position="499"/>
    </location>
</feature>
<feature type="mutagenesis site" description="Abolishes interaction with ORC1 and SIR4." evidence="4">
    <original>W</original>
    <variation>R</variation>
    <location>
        <position position="513"/>
    </location>
</feature>
<feature type="mutagenesis site" description="No effect." evidence="4">
    <original>KK</original>
    <variation>AA</variation>
    <location>
        <begin position="517"/>
        <end position="518"/>
    </location>
</feature>
<feature type="mutagenesis site" description="No effect." evidence="4">
    <original>C</original>
    <variation>A</variation>
    <location>
        <position position="534"/>
    </location>
</feature>
<feature type="mutagenesis site" description="Abolishes interaction with SIR4." evidence="4">
    <original>KKK</original>
    <variation>AAA</variation>
    <location>
        <begin position="538"/>
        <end position="540"/>
    </location>
</feature>
<feature type="mutagenesis site" description="No effect.">
    <original>C</original>
    <variation>A</variation>
    <location>
        <position position="569"/>
    </location>
</feature>
<feature type="mutagenesis site" description="Abolishes interaction with ORC1 and SIR4." evidence="4">
    <original>C</original>
    <variation>R</variation>
    <location>
        <position position="571"/>
    </location>
</feature>
<feature type="mutagenesis site" description="No effect." evidence="4">
    <original>V</original>
    <variation>G</variation>
    <location>
        <position position="572"/>
    </location>
</feature>
<feature type="mutagenesis site" description="No effect." evidence="4">
    <original>P</original>
    <variation>S</variation>
    <location>
        <position position="573"/>
    </location>
</feature>
<feature type="mutagenesis site" description="Abolishes interaction with SIR4." evidence="4">
    <original>DD</original>
    <variation>AA</variation>
    <location>
        <begin position="577"/>
        <end position="578"/>
    </location>
</feature>
<feature type="mutagenesis site" description="Abolishes interaction with ORC1 and SIR4." evidence="4">
    <original>L</original>
    <variation>P</variation>
    <variation>Q</variation>
    <location>
        <position position="584"/>
    </location>
</feature>
<feature type="mutagenesis site" description="Abolishes interaction with SIR4." evidence="4">
    <original>DD</original>
    <variation>AA</variation>
    <location>
        <begin position="586"/>
        <end position="587"/>
    </location>
</feature>
<feature type="strand" evidence="10">
    <location>
        <begin position="464"/>
        <end position="473"/>
    </location>
</feature>
<feature type="strand" evidence="10">
    <location>
        <begin position="476"/>
        <end position="479"/>
    </location>
</feature>
<feature type="turn" evidence="10">
    <location>
        <begin position="480"/>
        <end position="483"/>
    </location>
</feature>
<feature type="strand" evidence="10">
    <location>
        <begin position="484"/>
        <end position="486"/>
    </location>
</feature>
<feature type="helix" evidence="10">
    <location>
        <begin position="493"/>
        <end position="496"/>
    </location>
</feature>
<feature type="helix" evidence="10">
    <location>
        <begin position="499"/>
        <end position="506"/>
    </location>
</feature>
<feature type="helix" evidence="10">
    <location>
        <begin position="513"/>
        <end position="516"/>
    </location>
</feature>
<feature type="strand" evidence="10">
    <location>
        <begin position="523"/>
        <end position="525"/>
    </location>
</feature>
<feature type="helix" evidence="10">
    <location>
        <begin position="530"/>
        <end position="533"/>
    </location>
</feature>
<feature type="strand" evidence="10">
    <location>
        <begin position="537"/>
        <end position="543"/>
    </location>
</feature>
<feature type="strand" evidence="10">
    <location>
        <begin position="547"/>
        <end position="550"/>
    </location>
</feature>
<feature type="strand" evidence="10">
    <location>
        <begin position="566"/>
        <end position="575"/>
    </location>
</feature>
<feature type="strand" evidence="11">
    <location>
        <begin position="577"/>
        <end position="579"/>
    </location>
</feature>
<feature type="strand" evidence="10">
    <location>
        <begin position="581"/>
        <end position="586"/>
    </location>
</feature>